<reference key="1">
    <citation type="journal article" date="1997" name="J. Biol. Chem.">
        <title>A novel interaction between the juxtamembrane region of the p55 tumor necrosis factor receptor and phosphatidylinositol-4-phosphate 5-kinase.</title>
        <authorList>
            <person name="Castellino A.M."/>
            <person name="Parker G.J."/>
            <person name="Boronenkov I.V."/>
            <person name="Anderson R.A."/>
            <person name="Chao M.V."/>
        </authorList>
    </citation>
    <scope>NUCLEOTIDE SEQUENCE [MRNA] (ISOFORM 1)</scope>
    <scope>FUNCTION</scope>
    <scope>INTERACTION WITH TNFRSF1A</scope>
    <scope>TISSUE SPECIFICITY</scope>
    <source>
        <tissue>Fetal brain</tissue>
    </source>
</reference>
<reference key="2">
    <citation type="submission" date="2004-10" db="EMBL/GenBank/DDBJ databases">
        <title>Cloning of human full-length CDSs in BD Creator(TM) system donor vector.</title>
        <authorList>
            <person name="Kalnine N."/>
            <person name="Chen X."/>
            <person name="Rolfs A."/>
            <person name="Halleck A."/>
            <person name="Hines L."/>
            <person name="Eisenstein S."/>
            <person name="Koundinya M."/>
            <person name="Raphael J."/>
            <person name="Moreira D."/>
            <person name="Kelley T."/>
            <person name="LaBaer J."/>
            <person name="Lin Y."/>
            <person name="Phelan M."/>
            <person name="Farmer A."/>
        </authorList>
    </citation>
    <scope>NUCLEOTIDE SEQUENCE [LARGE SCALE MRNA] (ISOFORM 1)</scope>
</reference>
<reference key="3">
    <citation type="journal article" date="2004" name="Genome Res.">
        <title>The status, quality, and expansion of the NIH full-length cDNA project: the Mammalian Gene Collection (MGC).</title>
        <authorList>
            <consortium name="The MGC Project Team"/>
        </authorList>
    </citation>
    <scope>NUCLEOTIDE SEQUENCE [LARGE SCALE MRNA] (ISOFORM 2)</scope>
    <source>
        <tissue>Lung</tissue>
    </source>
</reference>
<reference key="4">
    <citation type="journal article" date="2008" name="Mol. Cell">
        <title>Kinase-selective enrichment enables quantitative phosphoproteomics of the kinome across the cell cycle.</title>
        <authorList>
            <person name="Daub H."/>
            <person name="Olsen J.V."/>
            <person name="Bairlein M."/>
            <person name="Gnad F."/>
            <person name="Oppermann F.S."/>
            <person name="Korner R."/>
            <person name="Greff Z."/>
            <person name="Keri G."/>
            <person name="Stemmann O."/>
            <person name="Mann M."/>
        </authorList>
    </citation>
    <scope>PHOSPHORYLATION [LARGE SCALE ANALYSIS] AT SER-326</scope>
    <scope>IDENTIFICATION BY MASS SPECTROMETRY [LARGE SCALE ANALYSIS]</scope>
    <source>
        <tissue>Cervix carcinoma</tissue>
    </source>
</reference>
<reference key="5">
    <citation type="journal article" date="2008" name="Proc. Natl. Acad. Sci. U.S.A.">
        <title>A quantitative atlas of mitotic phosphorylation.</title>
        <authorList>
            <person name="Dephoure N."/>
            <person name="Zhou C."/>
            <person name="Villen J."/>
            <person name="Beausoleil S.A."/>
            <person name="Bakalarski C.E."/>
            <person name="Elledge S.J."/>
            <person name="Gygi S.P."/>
        </authorList>
    </citation>
    <scope>IDENTIFICATION BY MASS SPECTROMETRY [LARGE SCALE ANALYSIS]</scope>
    <source>
        <tissue>Cervix carcinoma</tissue>
    </source>
</reference>
<reference key="6">
    <citation type="journal article" date="2009" name="Mol. Cell. Proteomics">
        <title>Large-scale proteomics analysis of the human kinome.</title>
        <authorList>
            <person name="Oppermann F.S."/>
            <person name="Gnad F."/>
            <person name="Olsen J.V."/>
            <person name="Hornberger R."/>
            <person name="Greff Z."/>
            <person name="Keri G."/>
            <person name="Mann M."/>
            <person name="Daub H."/>
        </authorList>
    </citation>
    <scope>PHOSPHORYLATION [LARGE SCALE ANALYSIS] AT SER-326</scope>
    <scope>IDENTIFICATION BY MASS SPECTROMETRY [LARGE SCALE ANALYSIS]</scope>
</reference>
<reference key="7">
    <citation type="journal article" date="2009" name="Science">
        <title>Lysine acetylation targets protein complexes and co-regulates major cellular functions.</title>
        <authorList>
            <person name="Choudhary C."/>
            <person name="Kumar C."/>
            <person name="Gnad F."/>
            <person name="Nielsen M.L."/>
            <person name="Rehman M."/>
            <person name="Walther T.C."/>
            <person name="Olsen J.V."/>
            <person name="Mann M."/>
        </authorList>
    </citation>
    <scope>ACETYLATION [LARGE SCALE ANALYSIS] AT LYS-150</scope>
    <scope>IDENTIFICATION BY MASS SPECTROMETRY [LARGE SCALE ANALYSIS]</scope>
</reference>
<reference key="8">
    <citation type="journal article" date="2010" name="Biochem. J.">
        <title>PIP4Kbeta interacts with and modulates nuclear localization of the high-activity PtdIns5P-4-kinase isoform PIP4Kalpha.</title>
        <authorList>
            <person name="Bultsma Y."/>
            <person name="Keune W.-J."/>
            <person name="Divecha N."/>
        </authorList>
    </citation>
    <scope>BIOPHYSICOCHEMICAL PROPERTIES</scope>
    <scope>INTERACTION WITH PIP4K2A</scope>
    <scope>SUBCELLULAR LOCATION</scope>
    <scope>UBIQUITINATION</scope>
    <scope>IDENTIFICATION BY MASS SPECTROMETRY</scope>
</reference>
<reference key="9">
    <citation type="journal article" date="2011" name="BMC Syst. Biol.">
        <title>Initial characterization of the human central proteome.</title>
        <authorList>
            <person name="Burkard T.R."/>
            <person name="Planyavsky M."/>
            <person name="Kaupe I."/>
            <person name="Breitwieser F.P."/>
            <person name="Buerckstuemmer T."/>
            <person name="Bennett K.L."/>
            <person name="Superti-Furga G."/>
            <person name="Colinge J."/>
        </authorList>
    </citation>
    <scope>IDENTIFICATION BY MASS SPECTROMETRY [LARGE SCALE ANALYSIS]</scope>
</reference>
<reference key="10">
    <citation type="journal article" date="2012" name="Mol. Cell. Proteomics">
        <title>Comparative large-scale characterisation of plant vs. mammal proteins reveals similar and idiosyncratic N-alpha acetylation features.</title>
        <authorList>
            <person name="Bienvenut W.V."/>
            <person name="Sumpton D."/>
            <person name="Martinez A."/>
            <person name="Lilla S."/>
            <person name="Espagne C."/>
            <person name="Meinnel T."/>
            <person name="Giglione C."/>
        </authorList>
    </citation>
    <scope>ACETYLATION [LARGE SCALE ANALYSIS] AT SER-2</scope>
    <scope>CLEAVAGE OF INITIATOR METHIONINE [LARGE SCALE ANALYSIS]</scope>
    <scope>IDENTIFICATION BY MASS SPECTROMETRY [LARGE SCALE ANALYSIS]</scope>
</reference>
<reference key="11">
    <citation type="journal article" date="2019" name="Cell Rep.">
        <title>PIP4Ks Suppress Insulin Signaling through a Catalytic-Independent Mechanism.</title>
        <authorList>
            <person name="Wang D.G."/>
            <person name="Paddock M.N."/>
            <person name="Lundquist M.R."/>
            <person name="Sun J.Y."/>
            <person name="Mashadova O."/>
            <person name="Amadiume S."/>
            <person name="Bumpus T.W."/>
            <person name="Hodakoski C."/>
            <person name="Hopkins B.D."/>
            <person name="Fine M."/>
            <person name="Hill A."/>
            <person name="Yang T.J."/>
            <person name="Baskin J.M."/>
            <person name="Dow L.E."/>
            <person name="Cantley L.C."/>
        </authorList>
    </citation>
    <scope>FUNCTION</scope>
</reference>
<reference evidence="15" key="12">
    <citation type="journal article" date="1998" name="Cell">
        <title>Structure of type IIbeta phosphatidylinositol phosphate kinase: a protein kinase fold flattened for interfacial phosphorylation.</title>
        <authorList>
            <person name="Rao V.D."/>
            <person name="Misra S."/>
            <person name="Boronenkov I.V."/>
            <person name="Anderson R.A."/>
            <person name="Hurley J.H."/>
        </authorList>
    </citation>
    <scope>X-RAY CRYSTALLOGRAPHY (3.0 ANGSTROMS) OF 34-416</scope>
    <scope>HOMODIMERIZATION</scope>
</reference>
<reference evidence="16 17 20 21 22 23 24 25 26 27" key="13">
    <citation type="journal article" date="2016" name="Mol. Cell">
        <title>The Lipid Kinase PI5P4Kbeta Is an Intracellular GTP Sensor for Metabolism and Tumorigenesis.</title>
        <authorList>
            <person name="Sumita K."/>
            <person name="Lo Y.H."/>
            <person name="Takeuchi K."/>
            <person name="Senda M."/>
            <person name="Kofuji S."/>
            <person name="Ikeda Y."/>
            <person name="Terakawa J."/>
            <person name="Sasaki M."/>
            <person name="Yoshino H."/>
            <person name="Majd N."/>
            <person name="Zheng Y."/>
            <person name="Kahoud E.R."/>
            <person name="Yokota T."/>
            <person name="Emerling B.M."/>
            <person name="Asara J.M."/>
            <person name="Ishida T."/>
            <person name="Locasale J.W."/>
            <person name="Daikoku T."/>
            <person name="Anastasiou D."/>
            <person name="Senda T."/>
            <person name="Sasaki A.T."/>
        </authorList>
    </citation>
    <scope>X-RAY CRYSTALLOGRAPHY (2.15 ANGSTROMS) OF 31-416 OF WILD-TYPE APOENZYME AND IN COMPLEXES WITH ATP ANALOG; GTP ANALOG; AMP AND GMP AND MUTANTS MET-201; LEU-205 AND ALA-368 IN COMPLEXES WITH AMP AND GMP</scope>
    <scope>FUNCTION</scope>
    <scope>CATALYTIC ACTIVITY</scope>
    <scope>BIOPHYSICOCHEMICAL PROPERTIES</scope>
</reference>
<name>PI42B_HUMAN</name>
<gene>
    <name evidence="14" type="primary">PIP4K2B</name>
    <name type="synonym">PIP5K2B</name>
</gene>
<evidence type="ECO:0000250" key="1"/>
<evidence type="ECO:0000250" key="2">
    <source>
        <dbReference type="UniProtKB" id="P48426"/>
    </source>
</evidence>
<evidence type="ECO:0000250" key="3">
    <source>
        <dbReference type="UniProtKB" id="Q80XI4"/>
    </source>
</evidence>
<evidence type="ECO:0000250" key="4">
    <source>
        <dbReference type="UniProtKB" id="Q8TBX8"/>
    </source>
</evidence>
<evidence type="ECO:0000255" key="5">
    <source>
        <dbReference type="PROSITE-ProRule" id="PRU00781"/>
    </source>
</evidence>
<evidence type="ECO:0000269" key="6">
    <source>
    </source>
</evidence>
<evidence type="ECO:0000269" key="7">
    <source>
    </source>
</evidence>
<evidence type="ECO:0000269" key="8">
    <source>
    </source>
</evidence>
<evidence type="ECO:0000269" key="9">
    <source>
    </source>
</evidence>
<evidence type="ECO:0000269" key="10">
    <source>
    </source>
</evidence>
<evidence type="ECO:0000303" key="11">
    <source>
    </source>
</evidence>
<evidence type="ECO:0000305" key="12"/>
<evidence type="ECO:0000305" key="13">
    <source>
    </source>
</evidence>
<evidence type="ECO:0000312" key="14">
    <source>
        <dbReference type="HGNC" id="HGNC:8998"/>
    </source>
</evidence>
<evidence type="ECO:0007744" key="15">
    <source>
        <dbReference type="PDB" id="1BO1"/>
    </source>
</evidence>
<evidence type="ECO:0007744" key="16">
    <source>
        <dbReference type="PDB" id="3WZZ"/>
    </source>
</evidence>
<evidence type="ECO:0007744" key="17">
    <source>
        <dbReference type="PDB" id="3X01"/>
    </source>
</evidence>
<evidence type="ECO:0007744" key="18">
    <source>
        <dbReference type="PDB" id="3X03"/>
    </source>
</evidence>
<evidence type="ECO:0007744" key="19">
    <source>
        <dbReference type="PDB" id="3X04"/>
    </source>
</evidence>
<evidence type="ECO:0007744" key="20">
    <source>
        <dbReference type="PDB" id="3X05"/>
    </source>
</evidence>
<evidence type="ECO:0007744" key="21">
    <source>
        <dbReference type="PDB" id="3X06"/>
    </source>
</evidence>
<evidence type="ECO:0007744" key="22">
    <source>
        <dbReference type="PDB" id="3X07"/>
    </source>
</evidence>
<evidence type="ECO:0007744" key="23">
    <source>
        <dbReference type="PDB" id="3X08"/>
    </source>
</evidence>
<evidence type="ECO:0007744" key="24">
    <source>
        <dbReference type="PDB" id="3X09"/>
    </source>
</evidence>
<evidence type="ECO:0007744" key="25">
    <source>
        <dbReference type="PDB" id="3X0A"/>
    </source>
</evidence>
<evidence type="ECO:0007744" key="26">
    <source>
        <dbReference type="PDB" id="3X0B"/>
    </source>
</evidence>
<evidence type="ECO:0007744" key="27">
    <source>
        <dbReference type="PDB" id="3X0C"/>
    </source>
</evidence>
<evidence type="ECO:0007744" key="28">
    <source>
    </source>
</evidence>
<evidence type="ECO:0007744" key="29">
    <source>
    </source>
</evidence>
<evidence type="ECO:0007744" key="30">
    <source>
    </source>
</evidence>
<evidence type="ECO:0007744" key="31">
    <source>
    </source>
</evidence>
<evidence type="ECO:0007829" key="32">
    <source>
        <dbReference type="PDB" id="1BO1"/>
    </source>
</evidence>
<evidence type="ECO:0007829" key="33">
    <source>
        <dbReference type="PDB" id="3X01"/>
    </source>
</evidence>
<evidence type="ECO:0007829" key="34">
    <source>
        <dbReference type="PDB" id="3X02"/>
    </source>
</evidence>
<evidence type="ECO:0007829" key="35">
    <source>
        <dbReference type="PDB" id="7N81"/>
    </source>
</evidence>
<organism>
    <name type="scientific">Homo sapiens</name>
    <name type="common">Human</name>
    <dbReference type="NCBI Taxonomy" id="9606"/>
    <lineage>
        <taxon>Eukaryota</taxon>
        <taxon>Metazoa</taxon>
        <taxon>Chordata</taxon>
        <taxon>Craniata</taxon>
        <taxon>Vertebrata</taxon>
        <taxon>Euteleostomi</taxon>
        <taxon>Mammalia</taxon>
        <taxon>Eutheria</taxon>
        <taxon>Euarchontoglires</taxon>
        <taxon>Primates</taxon>
        <taxon>Haplorrhini</taxon>
        <taxon>Catarrhini</taxon>
        <taxon>Hominidae</taxon>
        <taxon>Homo</taxon>
    </lineage>
</organism>
<feature type="initiator methionine" description="Removed" evidence="31">
    <location>
        <position position="1"/>
    </location>
</feature>
<feature type="chain" id="PRO_0000185470" description="Phosphatidylinositol 5-phosphate 4-kinase type-2 beta">
    <location>
        <begin position="2"/>
        <end position="416"/>
    </location>
</feature>
<feature type="domain" description="PIPK" evidence="5">
    <location>
        <begin position="38"/>
        <end position="415"/>
    </location>
</feature>
<feature type="region of interest" description="Required for interaction with PIP5K1A" evidence="4">
    <location>
        <begin position="64"/>
        <end position="70"/>
    </location>
</feature>
<feature type="binding site" evidence="13 18">
    <location>
        <begin position="202"/>
        <end position="204"/>
    </location>
    <ligand>
        <name>ATP</name>
        <dbReference type="ChEBI" id="CHEBI:30616"/>
    </ligand>
</feature>
<feature type="binding site" evidence="13 19">
    <location>
        <begin position="203"/>
        <end position="204"/>
    </location>
    <ligand>
        <name>GTP</name>
        <dbReference type="ChEBI" id="CHEBI:37565"/>
    </ligand>
</feature>
<feature type="binding site" evidence="13 18">
    <location>
        <position position="214"/>
    </location>
    <ligand>
        <name>ATP</name>
        <dbReference type="ChEBI" id="CHEBI:30616"/>
    </ligand>
</feature>
<feature type="binding site" evidence="13 19">
    <location>
        <position position="214"/>
    </location>
    <ligand>
        <name>GTP</name>
        <dbReference type="ChEBI" id="CHEBI:37565"/>
    </ligand>
</feature>
<feature type="binding site" evidence="13 19">
    <location>
        <position position="369"/>
    </location>
    <ligand>
        <name>GTP</name>
        <dbReference type="ChEBI" id="CHEBI:37565"/>
    </ligand>
</feature>
<feature type="modified residue" description="N-acetylserine" evidence="31">
    <location>
        <position position="2"/>
    </location>
</feature>
<feature type="modified residue" description="Phosphothreonine" evidence="2">
    <location>
        <position position="8"/>
    </location>
</feature>
<feature type="modified residue" description="Phosphoserine" evidence="2">
    <location>
        <position position="19"/>
    </location>
</feature>
<feature type="modified residue" description="N6-acetyllysine" evidence="2">
    <location>
        <position position="94"/>
    </location>
</feature>
<feature type="modified residue" description="N6-acetyllysine" evidence="30">
    <location>
        <position position="150"/>
    </location>
</feature>
<feature type="modified residue" description="Phosphothreonine" evidence="3">
    <location>
        <position position="322"/>
    </location>
</feature>
<feature type="modified residue" description="Phosphoserine" evidence="28 29">
    <location>
        <position position="326"/>
    </location>
</feature>
<feature type="splice variant" id="VSP_010384" description="In isoform 2." evidence="11">
    <original>FLAQLKIMDYSL</original>
    <variation>EILVLSPGRRIA</variation>
    <location>
        <begin position="270"/>
        <end position="281"/>
    </location>
</feature>
<feature type="splice variant" id="VSP_010385" description="In isoform 2." evidence="11">
    <location>
        <begin position="282"/>
        <end position="416"/>
    </location>
</feature>
<feature type="sequence conflict" description="In Ref. 2; AAV38420." evidence="12" ref="2">
    <original>L</original>
    <variation>P</variation>
    <location>
        <position position="250"/>
    </location>
</feature>
<feature type="helix" evidence="33">
    <location>
        <begin position="41"/>
        <end position="57"/>
    </location>
</feature>
<feature type="helix" evidence="33">
    <location>
        <begin position="68"/>
        <end position="72"/>
    </location>
</feature>
<feature type="strand" evidence="33">
    <location>
        <begin position="74"/>
        <end position="82"/>
    </location>
</feature>
<feature type="strand" evidence="33">
    <location>
        <begin position="87"/>
        <end position="89"/>
    </location>
</feature>
<feature type="strand" evidence="33">
    <location>
        <begin position="91"/>
        <end position="99"/>
    </location>
</feature>
<feature type="helix" evidence="33">
    <location>
        <begin position="100"/>
        <end position="109"/>
    </location>
</feature>
<feature type="helix" evidence="33">
    <location>
        <begin position="114"/>
        <end position="122"/>
    </location>
</feature>
<feature type="strand" evidence="35">
    <location>
        <begin position="132"/>
        <end position="134"/>
    </location>
</feature>
<feature type="strand" evidence="33">
    <location>
        <begin position="139"/>
        <end position="141"/>
    </location>
</feature>
<feature type="strand" evidence="33">
    <location>
        <begin position="145"/>
        <end position="152"/>
    </location>
</feature>
<feature type="helix" evidence="33">
    <location>
        <begin position="154"/>
        <end position="173"/>
    </location>
</feature>
<feature type="turn" evidence="33">
    <location>
        <begin position="174"/>
        <end position="176"/>
    </location>
</feature>
<feature type="strand" evidence="33">
    <location>
        <begin position="183"/>
        <end position="191"/>
    </location>
</feature>
<feature type="strand" evidence="33">
    <location>
        <begin position="194"/>
        <end position="202"/>
    </location>
</feature>
<feature type="strand" evidence="33">
    <location>
        <begin position="207"/>
        <end position="209"/>
    </location>
</feature>
<feature type="strand" evidence="33">
    <location>
        <begin position="213"/>
        <end position="217"/>
    </location>
</feature>
<feature type="strand" evidence="32">
    <location>
        <begin position="221"/>
        <end position="224"/>
    </location>
</feature>
<feature type="turn" evidence="33">
    <location>
        <begin position="228"/>
        <end position="232"/>
    </location>
</feature>
<feature type="strand" evidence="33">
    <location>
        <begin position="233"/>
        <end position="235"/>
    </location>
</feature>
<feature type="strand" evidence="33">
    <location>
        <begin position="237"/>
        <end position="239"/>
    </location>
</feature>
<feature type="helix" evidence="33">
    <location>
        <begin position="240"/>
        <end position="245"/>
    </location>
</feature>
<feature type="helix" evidence="33">
    <location>
        <begin position="254"/>
        <end position="273"/>
    </location>
</feature>
<feature type="strand" evidence="33">
    <location>
        <begin position="280"/>
        <end position="287"/>
    </location>
</feature>
<feature type="helix" evidence="33">
    <location>
        <begin position="288"/>
        <end position="303"/>
    </location>
</feature>
<feature type="turn" evidence="33">
    <location>
        <begin position="344"/>
        <end position="346"/>
    </location>
</feature>
<feature type="turn" evidence="32">
    <location>
        <begin position="347"/>
        <end position="349"/>
    </location>
</feature>
<feature type="strand" evidence="33">
    <location>
        <begin position="350"/>
        <end position="352"/>
    </location>
</feature>
<feature type="strand" evidence="32">
    <location>
        <begin position="353"/>
        <end position="355"/>
    </location>
</feature>
<feature type="strand" evidence="34">
    <location>
        <begin position="357"/>
        <end position="359"/>
    </location>
</feature>
<feature type="strand" evidence="33">
    <location>
        <begin position="361"/>
        <end position="368"/>
    </location>
</feature>
<feature type="strand" evidence="32">
    <location>
        <begin position="394"/>
        <end position="396"/>
    </location>
</feature>
<feature type="helix" evidence="33">
    <location>
        <begin position="401"/>
        <end position="412"/>
    </location>
</feature>
<feature type="strand" evidence="34">
    <location>
        <begin position="414"/>
        <end position="416"/>
    </location>
</feature>
<proteinExistence type="evidence at protein level"/>
<protein>
    <recommendedName>
        <fullName evidence="12">Phosphatidylinositol 5-phosphate 4-kinase type-2 beta</fullName>
        <ecNumber evidence="13">2.7.1.149</ecNumber>
    </recommendedName>
    <alternativeName>
        <fullName>1-phosphatidylinositol 5-phosphate 4-kinase 2-beta</fullName>
    </alternativeName>
    <alternativeName>
        <fullName>Diphosphoinositide kinase 2-beta</fullName>
    </alternativeName>
    <alternativeName>
        <fullName>Phosphatidylinositol 5-phosphate 4-kinase type II beta</fullName>
        <shortName>PI(5)P 4-kinase type II beta</shortName>
        <shortName>PIP4KII-beta</shortName>
    </alternativeName>
    <alternativeName>
        <fullName>PtdIns(5)P-4-kinase isoform 2-beta</fullName>
    </alternativeName>
</protein>
<accession>P78356</accession>
<accession>Q5U0E8</accession>
<accession>Q8TBP2</accession>
<dbReference type="EC" id="2.7.1.149" evidence="13"/>
<dbReference type="EMBL" id="U85245">
    <property type="protein sequence ID" value="AAB48596.1"/>
    <property type="molecule type" value="mRNA"/>
</dbReference>
<dbReference type="EMBL" id="BT019614">
    <property type="protein sequence ID" value="AAV38420.1"/>
    <property type="molecule type" value="mRNA"/>
</dbReference>
<dbReference type="EMBL" id="BC027459">
    <property type="protein sequence ID" value="AAH27459.1"/>
    <property type="molecule type" value="mRNA"/>
</dbReference>
<dbReference type="CCDS" id="CCDS11329.1">
    <molecule id="P78356-1"/>
</dbReference>
<dbReference type="RefSeq" id="NP_003550.1">
    <molecule id="P78356-1"/>
    <property type="nucleotide sequence ID" value="NM_003559.5"/>
</dbReference>
<dbReference type="PDB" id="1BO1">
    <property type="method" value="X-ray"/>
    <property type="resolution" value="3.00 A"/>
    <property type="chains" value="A/B=1-416"/>
</dbReference>
<dbReference type="PDB" id="3WZZ">
    <property type="method" value="X-ray"/>
    <property type="resolution" value="2.60 A"/>
    <property type="chains" value="A/B=31-416"/>
</dbReference>
<dbReference type="PDB" id="3X01">
    <property type="method" value="X-ray"/>
    <property type="resolution" value="2.15 A"/>
    <property type="chains" value="A/B=31-416"/>
</dbReference>
<dbReference type="PDB" id="3X02">
    <property type="method" value="X-ray"/>
    <property type="resolution" value="2.45 A"/>
    <property type="chains" value="A/B=31-416"/>
</dbReference>
<dbReference type="PDB" id="3X03">
    <property type="method" value="X-ray"/>
    <property type="resolution" value="2.70 A"/>
    <property type="chains" value="A/B=31-416"/>
</dbReference>
<dbReference type="PDB" id="3X04">
    <property type="method" value="X-ray"/>
    <property type="resolution" value="2.60 A"/>
    <property type="chains" value="A/B=31-416"/>
</dbReference>
<dbReference type="PDB" id="3X05">
    <property type="method" value="X-ray"/>
    <property type="resolution" value="2.50 A"/>
    <property type="chains" value="A/B=31-416"/>
</dbReference>
<dbReference type="PDB" id="3X06">
    <property type="method" value="X-ray"/>
    <property type="resolution" value="2.65 A"/>
    <property type="chains" value="A/B=31-416"/>
</dbReference>
<dbReference type="PDB" id="3X07">
    <property type="method" value="X-ray"/>
    <property type="resolution" value="2.60 A"/>
    <property type="chains" value="A/B=31-416"/>
</dbReference>
<dbReference type="PDB" id="3X08">
    <property type="method" value="X-ray"/>
    <property type="resolution" value="2.75 A"/>
    <property type="chains" value="A/B=31-416"/>
</dbReference>
<dbReference type="PDB" id="3X09">
    <property type="method" value="X-ray"/>
    <property type="resolution" value="2.70 A"/>
    <property type="chains" value="A/B=31-416"/>
</dbReference>
<dbReference type="PDB" id="3X0A">
    <property type="method" value="X-ray"/>
    <property type="resolution" value="2.60 A"/>
    <property type="chains" value="A/B=31-416"/>
</dbReference>
<dbReference type="PDB" id="3X0B">
    <property type="method" value="X-ray"/>
    <property type="resolution" value="2.60 A"/>
    <property type="chains" value="A/B=31-416"/>
</dbReference>
<dbReference type="PDB" id="3X0C">
    <property type="method" value="X-ray"/>
    <property type="resolution" value="2.55 A"/>
    <property type="chains" value="A/B=31-416"/>
</dbReference>
<dbReference type="PDB" id="6K4G">
    <property type="method" value="X-ray"/>
    <property type="resolution" value="2.70 A"/>
    <property type="chains" value="A/B=31-416"/>
</dbReference>
<dbReference type="PDB" id="6K4H">
    <property type="method" value="X-ray"/>
    <property type="resolution" value="2.55 A"/>
    <property type="chains" value="A/B=31-416"/>
</dbReference>
<dbReference type="PDB" id="7EM1">
    <property type="method" value="X-ray"/>
    <property type="resolution" value="2.65 A"/>
    <property type="chains" value="A/B=31-416"/>
</dbReference>
<dbReference type="PDB" id="7EM2">
    <property type="method" value="X-ray"/>
    <property type="resolution" value="2.60 A"/>
    <property type="chains" value="A/B=31-416"/>
</dbReference>
<dbReference type="PDB" id="7EM3">
    <property type="method" value="X-ray"/>
    <property type="resolution" value="3.10 A"/>
    <property type="chains" value="A/B=31-416"/>
</dbReference>
<dbReference type="PDB" id="7EM4">
    <property type="method" value="X-ray"/>
    <property type="resolution" value="2.80 A"/>
    <property type="chains" value="A/B=31-416"/>
</dbReference>
<dbReference type="PDB" id="7EM5">
    <property type="method" value="X-ray"/>
    <property type="resolution" value="2.80 A"/>
    <property type="chains" value="A/B=31-416"/>
</dbReference>
<dbReference type="PDB" id="7EM6">
    <property type="method" value="X-ray"/>
    <property type="resolution" value="2.95 A"/>
    <property type="chains" value="A/B=31-416"/>
</dbReference>
<dbReference type="PDB" id="7EM7">
    <property type="method" value="X-ray"/>
    <property type="resolution" value="3.45 A"/>
    <property type="chains" value="A/B=31-416"/>
</dbReference>
<dbReference type="PDB" id="7EM8">
    <property type="method" value="X-ray"/>
    <property type="resolution" value="3.05 A"/>
    <property type="chains" value="A/B=31-416"/>
</dbReference>
<dbReference type="PDB" id="7N80">
    <property type="method" value="X-ray"/>
    <property type="resolution" value="2.50 A"/>
    <property type="chains" value="A/B=32-416"/>
</dbReference>
<dbReference type="PDB" id="7N81">
    <property type="method" value="X-ray"/>
    <property type="resolution" value="2.70 A"/>
    <property type="chains" value="A/B=32-416"/>
</dbReference>
<dbReference type="PDBsum" id="1BO1"/>
<dbReference type="PDBsum" id="3WZZ"/>
<dbReference type="PDBsum" id="3X01"/>
<dbReference type="PDBsum" id="3X02"/>
<dbReference type="PDBsum" id="3X03"/>
<dbReference type="PDBsum" id="3X04"/>
<dbReference type="PDBsum" id="3X05"/>
<dbReference type="PDBsum" id="3X06"/>
<dbReference type="PDBsum" id="3X07"/>
<dbReference type="PDBsum" id="3X08"/>
<dbReference type="PDBsum" id="3X09"/>
<dbReference type="PDBsum" id="3X0A"/>
<dbReference type="PDBsum" id="3X0B"/>
<dbReference type="PDBsum" id="3X0C"/>
<dbReference type="PDBsum" id="6K4G"/>
<dbReference type="PDBsum" id="6K4H"/>
<dbReference type="PDBsum" id="7EM1"/>
<dbReference type="PDBsum" id="7EM2"/>
<dbReference type="PDBsum" id="7EM3"/>
<dbReference type="PDBsum" id="7EM4"/>
<dbReference type="PDBsum" id="7EM5"/>
<dbReference type="PDBsum" id="7EM6"/>
<dbReference type="PDBsum" id="7EM7"/>
<dbReference type="PDBsum" id="7EM8"/>
<dbReference type="PDBsum" id="7N80"/>
<dbReference type="PDBsum" id="7N81"/>
<dbReference type="SMR" id="P78356"/>
<dbReference type="BioGRID" id="113985">
    <property type="interactions" value="89"/>
</dbReference>
<dbReference type="FunCoup" id="P78356">
    <property type="interactions" value="3383"/>
</dbReference>
<dbReference type="IntAct" id="P78356">
    <property type="interactions" value="64"/>
</dbReference>
<dbReference type="MINT" id="P78356"/>
<dbReference type="STRING" id="9606.ENSP00000482548"/>
<dbReference type="BindingDB" id="P78356"/>
<dbReference type="ChEMBL" id="CHEMBL5667"/>
<dbReference type="DrugBank" id="DB12010">
    <property type="generic name" value="Fostamatinib"/>
</dbReference>
<dbReference type="DrugCentral" id="P78356"/>
<dbReference type="SwissLipids" id="SLP:000001885"/>
<dbReference type="GlyGen" id="P78356">
    <property type="glycosylation" value="2 sites, 1 N-linked glycan (1 site), 1 O-linked glycan (1 site)"/>
</dbReference>
<dbReference type="iPTMnet" id="P78356"/>
<dbReference type="PhosphoSitePlus" id="P78356"/>
<dbReference type="SwissPalm" id="P78356"/>
<dbReference type="BioMuta" id="PIP4K2B"/>
<dbReference type="DMDM" id="47605991"/>
<dbReference type="jPOST" id="P78356"/>
<dbReference type="MassIVE" id="P78356"/>
<dbReference type="PaxDb" id="9606-ENSP00000482548"/>
<dbReference type="PeptideAtlas" id="P78356"/>
<dbReference type="ProteomicsDB" id="57586">
    <molecule id="P78356-1"/>
</dbReference>
<dbReference type="ProteomicsDB" id="57587">
    <molecule id="P78356-2"/>
</dbReference>
<dbReference type="Pumba" id="P78356"/>
<dbReference type="Antibodypedia" id="72369">
    <property type="antibodies" value="182 antibodies from 26 providers"/>
</dbReference>
<dbReference type="DNASU" id="8396"/>
<dbReference type="Ensembl" id="ENST00000613180.2">
    <molecule id="P78356-1"/>
    <property type="protein sequence ID" value="ENSP00000480776.1"/>
    <property type="gene ID" value="ENSG00000277292.2"/>
</dbReference>
<dbReference type="Ensembl" id="ENST00000619039.5">
    <molecule id="P78356-1"/>
    <property type="protein sequence ID" value="ENSP00000482548.1"/>
    <property type="gene ID" value="ENSG00000276293.5"/>
</dbReference>
<dbReference type="GeneID" id="8396"/>
<dbReference type="KEGG" id="hsa:8396"/>
<dbReference type="MANE-Select" id="ENST00000619039.5">
    <property type="protein sequence ID" value="ENSP00000482548.1"/>
    <property type="RefSeq nucleotide sequence ID" value="NM_003559.5"/>
    <property type="RefSeq protein sequence ID" value="NP_003550.1"/>
</dbReference>
<dbReference type="UCSC" id="uc002hqs.4">
    <molecule id="P78356-1"/>
    <property type="organism name" value="human"/>
</dbReference>
<dbReference type="AGR" id="HGNC:8998"/>
<dbReference type="CTD" id="8396"/>
<dbReference type="DisGeNET" id="8396"/>
<dbReference type="GeneCards" id="PIP4K2B"/>
<dbReference type="HGNC" id="HGNC:8998">
    <property type="gene designation" value="PIP4K2B"/>
</dbReference>
<dbReference type="HPA" id="ENSG00000276293">
    <property type="expression patterns" value="Low tissue specificity"/>
</dbReference>
<dbReference type="MIM" id="603261">
    <property type="type" value="gene"/>
</dbReference>
<dbReference type="neXtProt" id="NX_P78356"/>
<dbReference type="OpenTargets" id="ENSG00000276293"/>
<dbReference type="PharmGKB" id="PA162399640"/>
<dbReference type="VEuPathDB" id="HostDB:ENSG00000276293"/>
<dbReference type="eggNOG" id="KOG0229">
    <property type="taxonomic scope" value="Eukaryota"/>
</dbReference>
<dbReference type="GeneTree" id="ENSGT00940000159874"/>
<dbReference type="HOGENOM" id="CLU_004312_7_0_1"/>
<dbReference type="InParanoid" id="P78356"/>
<dbReference type="OMA" id="MKSHENA"/>
<dbReference type="OrthoDB" id="20783at2759"/>
<dbReference type="PAN-GO" id="P78356">
    <property type="GO annotations" value="3 GO annotations based on evolutionary models"/>
</dbReference>
<dbReference type="PhylomeDB" id="P78356"/>
<dbReference type="TreeFam" id="TF354315"/>
<dbReference type="BRENDA" id="2.7.1.149">
    <property type="organism ID" value="2681"/>
</dbReference>
<dbReference type="PathwayCommons" id="P78356"/>
<dbReference type="Reactome" id="R-HSA-1660499">
    <property type="pathway name" value="Synthesis of PIPs at the plasma membrane"/>
</dbReference>
<dbReference type="Reactome" id="R-HSA-6811555">
    <property type="pathway name" value="PI5P Regulates TP53 Acetylation"/>
</dbReference>
<dbReference type="Reactome" id="R-HSA-6811558">
    <property type="pathway name" value="PI5P, PP2A and IER3 Regulate PI3K/AKT Signaling"/>
</dbReference>
<dbReference type="Reactome" id="R-HSA-8847453">
    <property type="pathway name" value="Synthesis of PIPs in the nucleus"/>
</dbReference>
<dbReference type="SABIO-RK" id="P78356"/>
<dbReference type="SignaLink" id="P78356"/>
<dbReference type="SIGNOR" id="P78356"/>
<dbReference type="BioGRID-ORCS" id="8396">
    <property type="hits" value="11 hits in 1156 CRISPR screens"/>
</dbReference>
<dbReference type="ChiTaRS" id="PIP4K2B">
    <property type="organism name" value="human"/>
</dbReference>
<dbReference type="EvolutionaryTrace" id="P78356"/>
<dbReference type="GeneWiki" id="PIP4K2B"/>
<dbReference type="GenomeRNAi" id="8396"/>
<dbReference type="Pharos" id="P78356">
    <property type="development level" value="Tchem"/>
</dbReference>
<dbReference type="PRO" id="PR:P78356"/>
<dbReference type="Proteomes" id="UP000005640">
    <property type="component" value="Chromosome 17"/>
</dbReference>
<dbReference type="RNAct" id="P78356">
    <property type="molecule type" value="protein"/>
</dbReference>
<dbReference type="Bgee" id="ENSG00000276293">
    <property type="expression patterns" value="Expressed in cortical plate and 99 other cell types or tissues"/>
</dbReference>
<dbReference type="ExpressionAtlas" id="P78356">
    <property type="expression patterns" value="baseline and differential"/>
</dbReference>
<dbReference type="GO" id="GO:0005776">
    <property type="term" value="C:autophagosome"/>
    <property type="evidence" value="ECO:0000315"/>
    <property type="project" value="ParkinsonsUK-UCL"/>
</dbReference>
<dbReference type="GO" id="GO:0005829">
    <property type="term" value="C:cytosol"/>
    <property type="evidence" value="ECO:0000304"/>
    <property type="project" value="Reactome"/>
</dbReference>
<dbReference type="GO" id="GO:0005789">
    <property type="term" value="C:endoplasmic reticulum membrane"/>
    <property type="evidence" value="ECO:0007669"/>
    <property type="project" value="UniProtKB-SubCell"/>
</dbReference>
<dbReference type="GO" id="GO:0005654">
    <property type="term" value="C:nucleoplasm"/>
    <property type="evidence" value="ECO:0000314"/>
    <property type="project" value="HPA"/>
</dbReference>
<dbReference type="GO" id="GO:0005634">
    <property type="term" value="C:nucleus"/>
    <property type="evidence" value="ECO:0000314"/>
    <property type="project" value="FlyBase"/>
</dbReference>
<dbReference type="GO" id="GO:0005886">
    <property type="term" value="C:plasma membrane"/>
    <property type="evidence" value="ECO:0000314"/>
    <property type="project" value="FlyBase"/>
</dbReference>
<dbReference type="GO" id="GO:0016308">
    <property type="term" value="F:1-phosphatidylinositol-4-phosphate 5-kinase activity"/>
    <property type="evidence" value="ECO:0000314"/>
    <property type="project" value="UniProtKB"/>
</dbReference>
<dbReference type="GO" id="GO:0016309">
    <property type="term" value="F:1-phosphatidylinositol-5-phosphate 4-kinase activity"/>
    <property type="evidence" value="ECO:0000318"/>
    <property type="project" value="GO_Central"/>
</dbReference>
<dbReference type="GO" id="GO:0005524">
    <property type="term" value="F:ATP binding"/>
    <property type="evidence" value="ECO:0000314"/>
    <property type="project" value="UniProtKB"/>
</dbReference>
<dbReference type="GO" id="GO:0005525">
    <property type="term" value="F:GTP binding"/>
    <property type="evidence" value="ECO:0000314"/>
    <property type="project" value="UniProtKB"/>
</dbReference>
<dbReference type="GO" id="GO:0042803">
    <property type="term" value="F:protein homodimerization activity"/>
    <property type="evidence" value="ECO:0000314"/>
    <property type="project" value="CAFA"/>
</dbReference>
<dbReference type="GO" id="GO:1902635">
    <property type="term" value="P:1-phosphatidyl-1D-myo-inositol 4,5-bisphosphate biosynthetic process"/>
    <property type="evidence" value="ECO:0000314"/>
    <property type="project" value="UniProtKB"/>
</dbReference>
<dbReference type="GO" id="GO:0061909">
    <property type="term" value="P:autophagosome-lysosome fusion"/>
    <property type="evidence" value="ECO:0000250"/>
    <property type="project" value="UniProtKB"/>
</dbReference>
<dbReference type="GO" id="GO:0007166">
    <property type="term" value="P:cell surface receptor signaling pathway"/>
    <property type="evidence" value="ECO:0000304"/>
    <property type="project" value="ProtInc"/>
</dbReference>
<dbReference type="GO" id="GO:0046627">
    <property type="term" value="P:negative regulation of insulin receptor signaling pathway"/>
    <property type="evidence" value="ECO:0000315"/>
    <property type="project" value="UniProtKB"/>
</dbReference>
<dbReference type="GO" id="GO:0046854">
    <property type="term" value="P:phosphatidylinositol phosphate biosynthetic process"/>
    <property type="evidence" value="ECO:0000318"/>
    <property type="project" value="GO_Central"/>
</dbReference>
<dbReference type="GO" id="GO:2000786">
    <property type="term" value="P:positive regulation of autophagosome assembly"/>
    <property type="evidence" value="ECO:0000315"/>
    <property type="project" value="ParkinsonsUK-UCL"/>
</dbReference>
<dbReference type="GO" id="GO:0010506">
    <property type="term" value="P:regulation of autophagy"/>
    <property type="evidence" value="ECO:0000315"/>
    <property type="project" value="ParkinsonsUK-UCL"/>
</dbReference>
<dbReference type="CDD" id="cd17310">
    <property type="entry name" value="PIPKc_PIP5K2B"/>
    <property type="match status" value="1"/>
</dbReference>
<dbReference type="DisProt" id="DP00054"/>
<dbReference type="FunFam" id="3.30.800.10:FF:000002">
    <property type="entry name" value="Phosphatidylinositol 5-phosphate 4-kinase type-2 beta"/>
    <property type="match status" value="1"/>
</dbReference>
<dbReference type="FunFam" id="3.30.810.10:FF:000003">
    <property type="entry name" value="Phosphatidylinositol 5-phosphate 4-kinase type-2 beta"/>
    <property type="match status" value="1"/>
</dbReference>
<dbReference type="FunFam" id="3.30.810.10:FF:000004">
    <property type="entry name" value="Phosphatidylinositol 5-phosphate 4-kinase type-2 beta"/>
    <property type="match status" value="1"/>
</dbReference>
<dbReference type="Gene3D" id="3.30.810.10">
    <property type="entry name" value="2-Layer Sandwich"/>
    <property type="match status" value="2"/>
</dbReference>
<dbReference type="Gene3D" id="3.30.800.10">
    <property type="entry name" value="Phosphatidylinositol Phosphate Kinase II Beta"/>
    <property type="match status" value="1"/>
</dbReference>
<dbReference type="InterPro" id="IPR027483">
    <property type="entry name" value="PInositol-4-P-4/5-kinase_C_sf"/>
</dbReference>
<dbReference type="InterPro" id="IPR002498">
    <property type="entry name" value="PInositol-4-P-4/5-kinase_core"/>
</dbReference>
<dbReference type="InterPro" id="IPR027484">
    <property type="entry name" value="PInositol-4-P-5-kinase_N"/>
</dbReference>
<dbReference type="InterPro" id="IPR023610">
    <property type="entry name" value="PInositol-4/5-P-5/4-kinase"/>
</dbReference>
<dbReference type="PANTHER" id="PTHR23086:SF22">
    <property type="entry name" value="PHOSPHATIDYLINOSITOL 5-PHOSPHATE 4-KINASE TYPE-2 BETA"/>
    <property type="match status" value="1"/>
</dbReference>
<dbReference type="PANTHER" id="PTHR23086">
    <property type="entry name" value="PHOSPHATIDYLINOSITOL-4-PHOSPHATE 5-KINASE"/>
    <property type="match status" value="1"/>
</dbReference>
<dbReference type="Pfam" id="PF01504">
    <property type="entry name" value="PIP5K"/>
    <property type="match status" value="1"/>
</dbReference>
<dbReference type="SMART" id="SM00330">
    <property type="entry name" value="PIPKc"/>
    <property type="match status" value="1"/>
</dbReference>
<dbReference type="SUPFAM" id="SSF56104">
    <property type="entry name" value="SAICAR synthase-like"/>
    <property type="match status" value="1"/>
</dbReference>
<dbReference type="PROSITE" id="PS51455">
    <property type="entry name" value="PIPK"/>
    <property type="match status" value="1"/>
</dbReference>
<sequence>MSSNCTSTTAVAVAPLSASKTKTKKKHFVCQKVKLFRASEPILSVLMWGVNHTINELSNVPVPVMLMPDDFKAYSKIKVDNHLFNKENLPSRFKFKEYCPMVFRNLRERFGIDDQDYQNSVTRSAPINSDSQGRCGTRFLTTYDRRFVIKTVSSEDVAEMHNILKKYHQFIVECHGNTLLPQFLGMYRLTVDGVETYMVVTRNVFSHRLTVHRKYDLKGSTVAREASDKEKAKDLPTFKDNDFLNEGQKLHVGEESKKNFLEKLKRDVEFLAQLKIMDYSLLVGIHDVDRAEQEEMEVEERAEDEECENDGVGGNLLCSYGTPPDSPGNLLSFPRFFGPGEFDPSVDVYAMKSHESSPKKEVYFMAIIDILTPYDTKKKAAHAAKTVKHGAGAEISTVNPEQYSKRFNEFMSNILT</sequence>
<keyword id="KW-0002">3D-structure</keyword>
<keyword id="KW-0007">Acetylation</keyword>
<keyword id="KW-0025">Alternative splicing</keyword>
<keyword id="KW-0067">ATP-binding</keyword>
<keyword id="KW-1003">Cell membrane</keyword>
<keyword id="KW-0963">Cytoplasm</keyword>
<keyword id="KW-0256">Endoplasmic reticulum</keyword>
<keyword id="KW-0342">GTP-binding</keyword>
<keyword id="KW-0418">Kinase</keyword>
<keyword id="KW-0443">Lipid metabolism</keyword>
<keyword id="KW-0472">Membrane</keyword>
<keyword id="KW-0547">Nucleotide-binding</keyword>
<keyword id="KW-0539">Nucleus</keyword>
<keyword id="KW-0597">Phosphoprotein</keyword>
<keyword id="KW-1267">Proteomics identification</keyword>
<keyword id="KW-1185">Reference proteome</keyword>
<keyword id="KW-0808">Transferase</keyword>
<keyword id="KW-0832">Ubl conjugation</keyword>
<comment type="function">
    <text evidence="8 9 10">Participates in the biosynthesis of phosphatidylinositol 4,5-bisphosphate (PubMed:26774281, PubMed:9038203). Preferentially utilizes GTP, rather than ATP, for PI(5)P phosphorylation and its activity reflects changes in direct proportion to the physiological GTP concentration (PubMed:26774281). Its GTP-sensing activity is critical for metabolic adaptation (PubMed:26774281). PIP4Ks negatively regulate insulin signaling through a catalytic-independent mechanism. They interact with PIP5Ks and suppress PIP5K-mediated PtdIns(4,5)P2 synthesis and insulin-dependent conversion to PtdIns(3,4,5)P3 (PubMed:31091439).</text>
</comment>
<comment type="catalytic activity">
    <reaction evidence="13">
        <text>a 1,2-diacyl-sn-glycero-3-phospho-(1D-myo-inositol-5-phosphate) + ATP = a 1,2-diacyl-sn-glycero-3-phospho-(1D-myo-inositol-4,5-bisphosphate) + ADP + H(+)</text>
        <dbReference type="Rhea" id="RHEA:12280"/>
        <dbReference type="ChEBI" id="CHEBI:15378"/>
        <dbReference type="ChEBI" id="CHEBI:30616"/>
        <dbReference type="ChEBI" id="CHEBI:57795"/>
        <dbReference type="ChEBI" id="CHEBI:58456"/>
        <dbReference type="ChEBI" id="CHEBI:456216"/>
        <dbReference type="EC" id="2.7.1.149"/>
    </reaction>
    <physiologicalReaction direction="left-to-right" evidence="13">
        <dbReference type="Rhea" id="RHEA:12281"/>
    </physiologicalReaction>
</comment>
<comment type="catalytic activity">
    <reaction evidence="8">
        <text>1,2-dihexadecanoyl-sn-glycero-3-phospho-(1D-myo-inositol-5-phosphate) + ATP = 1,2-dihexadecanoyl-sn-glycero-3-phospho-(1D-myo-inositol-4,5-bisphosphate) + ADP + H(+)</text>
        <dbReference type="Rhea" id="RHEA:55992"/>
        <dbReference type="ChEBI" id="CHEBI:15378"/>
        <dbReference type="ChEBI" id="CHEBI:30616"/>
        <dbReference type="ChEBI" id="CHEBI:83423"/>
        <dbReference type="ChEBI" id="CHEBI:84968"/>
        <dbReference type="ChEBI" id="CHEBI:456216"/>
    </reaction>
    <physiologicalReaction direction="left-to-right" evidence="13">
        <dbReference type="Rhea" id="RHEA:55993"/>
    </physiologicalReaction>
</comment>
<comment type="catalytic activity">
    <reaction evidence="8">
        <text>1,2-dihexadecanoyl-sn-glycero-3-phospho-(1D-myo-inositol-5-phosphate) + GTP = 1,2-dihexadecanoyl-sn-glycero-3-phospho-(1D-myo-inositol-4,5-bisphosphate) + GDP + H(+)</text>
        <dbReference type="Rhea" id="RHEA:55964"/>
        <dbReference type="ChEBI" id="CHEBI:15378"/>
        <dbReference type="ChEBI" id="CHEBI:37565"/>
        <dbReference type="ChEBI" id="CHEBI:58189"/>
        <dbReference type="ChEBI" id="CHEBI:83423"/>
        <dbReference type="ChEBI" id="CHEBI:84968"/>
    </reaction>
    <physiologicalReaction direction="left-to-right" evidence="13">
        <dbReference type="Rhea" id="RHEA:55965"/>
    </physiologicalReaction>
</comment>
<comment type="biophysicochemical properties">
    <kinetics>
        <KM evidence="7">30 uM for phosphatidylinositol-5- phosphate</KM>
        <KM evidence="8">88 uM for ATP</KM>
        <KM evidence="8">236 uM for GTP</KM>
        <Vmax evidence="7">0.2 pmol/min/ug enzyme</Vmax>
        <Vmax evidence="8">57.0 umol/min/mg enzyme toward ATP</Vmax>
        <Vmax evidence="8">88.0 umol/min/mg enzyme toward GTP</Vmax>
    </kinetics>
</comment>
<comment type="subunit">
    <text evidence="7 10">Homodimer. Binds TNFRSF1A (PubMed:9038203). Interacts with PIP4K2A; the interaction suppresses ubiquitination by the SPOP/CUL3 complex (PubMed:20583997).</text>
</comment>
<comment type="interaction">
    <interactant intactId="EBI-947090">
        <id>P78356</id>
    </interactant>
    <interactant intactId="EBI-2549423">
        <id>Q6NT76</id>
        <label>HMBOX1</label>
    </interactant>
    <organismsDiffer>false</organismsDiffer>
    <experiments>5</experiments>
</comment>
<comment type="interaction">
    <interactant intactId="EBI-947090">
        <id>P78356</id>
    </interactant>
    <interactant intactId="EBI-354861">
        <id>Q9C004</id>
        <label>SPRY4</label>
    </interactant>
    <organismsDiffer>false</organismsDiffer>
    <experiments>2</experiments>
</comment>
<comment type="interaction">
    <interactant intactId="EBI-11532361">
        <id>P78356-2</id>
    </interactant>
    <interactant intactId="EBI-5278764">
        <id>Q96GN5</id>
        <label>CDCA7L</label>
    </interactant>
    <organismsDiffer>false</organismsDiffer>
    <experiments>3</experiments>
</comment>
<comment type="interaction">
    <interactant intactId="EBI-11532361">
        <id>P78356-2</id>
    </interactant>
    <interactant intactId="EBI-347804">
        <id>P68400</id>
        <label>CSNK2A1</label>
    </interactant>
    <organismsDiffer>false</organismsDiffer>
    <experiments>3</experiments>
</comment>
<comment type="interaction">
    <interactant intactId="EBI-11532361">
        <id>P78356-2</id>
    </interactant>
    <interactant intactId="EBI-739361">
        <id>Q9UBY9</id>
        <label>HSPB7</label>
    </interactant>
    <organismsDiffer>false</organismsDiffer>
    <experiments>3</experiments>
</comment>
<comment type="interaction">
    <interactant intactId="EBI-11532361">
        <id>P78356-2</id>
    </interactant>
    <interactant intactId="EBI-715611">
        <id>Q9C086</id>
        <label>INO80B</label>
    </interactant>
    <organismsDiffer>false</organismsDiffer>
    <experiments>3</experiments>
</comment>
<comment type="interaction">
    <interactant intactId="EBI-11532361">
        <id>P78356-2</id>
    </interactant>
    <interactant intactId="EBI-12351611">
        <id>Q16719-2</id>
        <label>KYNU</label>
    </interactant>
    <organismsDiffer>false</organismsDiffer>
    <experiments>3</experiments>
</comment>
<comment type="interaction">
    <interactant intactId="EBI-11532361">
        <id>P78356-2</id>
    </interactant>
    <interactant intactId="EBI-744248">
        <id>P40692</id>
        <label>MLH1</label>
    </interactant>
    <organismsDiffer>false</organismsDiffer>
    <experiments>3</experiments>
</comment>
<comment type="interaction">
    <interactant intactId="EBI-11532361">
        <id>P78356-2</id>
    </interactant>
    <interactant intactId="EBI-744322">
        <id>O43395</id>
        <label>PRPF3</label>
    </interactant>
    <organismsDiffer>false</organismsDiffer>
    <experiments>3</experiments>
</comment>
<comment type="interaction">
    <interactant intactId="EBI-11532361">
        <id>P78356-2</id>
    </interactant>
    <interactant intactId="EBI-372273">
        <id>P20618</id>
        <label>PSMB1</label>
    </interactant>
    <organismsDiffer>false</organismsDiffer>
    <experiments>3</experiments>
</comment>
<comment type="interaction">
    <interactant intactId="EBI-11532361">
        <id>P78356-2</id>
    </interactant>
    <interactant intactId="EBI-747925">
        <id>Q9NQG5</id>
        <label>RPRD1B</label>
    </interactant>
    <organismsDiffer>false</organismsDiffer>
    <experiments>3</experiments>
</comment>
<comment type="interaction">
    <interactant intactId="EBI-11532361">
        <id>P78356-2</id>
    </interactant>
    <interactant intactId="EBI-10213055">
        <id>P52739-2</id>
        <label>ZNF131</label>
    </interactant>
    <organismsDiffer>false</organismsDiffer>
    <experiments>3</experiments>
</comment>
<comment type="subcellular location">
    <subcellularLocation>
        <location evidence="1">Endoplasmic reticulum membrane</location>
        <topology evidence="1">Peripheral membrane protein</topology>
    </subcellularLocation>
    <subcellularLocation>
        <location evidence="1">Cell membrane</location>
        <topology evidence="1">Peripheral membrane protein</topology>
    </subcellularLocation>
    <subcellularLocation>
        <location evidence="7">Nucleus</location>
    </subcellularLocation>
    <subcellularLocation>
        <location evidence="7">Cytoplasm</location>
    </subcellularLocation>
    <text evidence="1">Associated with the plasma membrane and the endoplasmic reticulum.</text>
</comment>
<comment type="alternative products">
    <event type="alternative splicing"/>
    <isoform>
        <id>P78356-1</id>
        <name>1</name>
        <sequence type="displayed"/>
    </isoform>
    <isoform>
        <id>P78356-2</id>
        <name>2</name>
        <sequence type="described" ref="VSP_010384 VSP_010385"/>
    </isoform>
</comment>
<comment type="tissue specificity">
    <text evidence="10">Highly expressed in brain, heart, pancreas, skeletal muscle and kidney. Detected at lower levels in placenta, lung and liver.</text>
</comment>
<comment type="PTM">
    <text evidence="7">Ubiquitinated by the SPOP/CUL3 complex. Ubiquitination is stimulated by PtdIns5P levels.</text>
</comment>
<comment type="PTM">
    <text evidence="6">Phosphorylated on serine residues.</text>
</comment>